<sequence length="239" mass="26637">MPDNLYATNMSLDLSITGHSTALPQRKSRSTYRFKAANSYVDESLFGSSGVRVDQTLQWNTAPPSQTPLLWSPGEIKENKKTSSCRPKSTPAGTPRKKIQYRVKSRTPSYCDESLFGGKVEECTWDAPWVKKEDTVKIRPLLWSPSPRLVQQSSMQNAKQGPLRAVHPPETSDSPLGTHKGLGAFWKPPESDSDYSPSPFSARQRQSTPGRETVRSASCSGRVTARRGSVKMQERPPWK</sequence>
<name>RITA1_XENLA</name>
<keyword id="KW-0963">Cytoplasm</keyword>
<keyword id="KW-0524">Neurogenesis</keyword>
<keyword id="KW-0914">Notch signaling pathway</keyword>
<keyword id="KW-0539">Nucleus</keyword>
<keyword id="KW-1185">Reference proteome</keyword>
<proteinExistence type="evidence at protein level"/>
<dbReference type="EMBL" id="BC070862">
    <property type="status" value="NOT_ANNOTATED_CDS"/>
    <property type="molecule type" value="mRNA"/>
</dbReference>
<dbReference type="ELM" id="P0CJ62"/>
<dbReference type="IntAct" id="P0CJ62">
    <property type="interactions" value="2"/>
</dbReference>
<dbReference type="MINT" id="P0CJ62"/>
<dbReference type="AGR" id="Xenbase:XB-GENE-6462308"/>
<dbReference type="Xenbase" id="XB-GENE-6462308">
    <property type="gene designation" value="rita1.L"/>
</dbReference>
<dbReference type="Proteomes" id="UP000186698">
    <property type="component" value="Unplaced"/>
</dbReference>
<dbReference type="GO" id="GO:0005737">
    <property type="term" value="C:cytoplasm"/>
    <property type="evidence" value="ECO:0000314"/>
    <property type="project" value="UniProtKB"/>
</dbReference>
<dbReference type="GO" id="GO:0005634">
    <property type="term" value="C:nucleus"/>
    <property type="evidence" value="ECO:0000314"/>
    <property type="project" value="UniProtKB"/>
</dbReference>
<dbReference type="GO" id="GO:0015631">
    <property type="term" value="F:tubulin binding"/>
    <property type="evidence" value="ECO:0000250"/>
    <property type="project" value="UniProtKB"/>
</dbReference>
<dbReference type="GO" id="GO:0045746">
    <property type="term" value="P:negative regulation of Notch signaling pathway"/>
    <property type="evidence" value="ECO:0000315"/>
    <property type="project" value="UniProtKB"/>
</dbReference>
<dbReference type="GO" id="GO:0000122">
    <property type="term" value="P:negative regulation of transcription by RNA polymerase II"/>
    <property type="evidence" value="ECO:0000304"/>
    <property type="project" value="UniProtKB"/>
</dbReference>
<dbReference type="GO" id="GO:0022008">
    <property type="term" value="P:neurogenesis"/>
    <property type="evidence" value="ECO:0000315"/>
    <property type="project" value="UniProtKB"/>
</dbReference>
<dbReference type="GO" id="GO:0007219">
    <property type="term" value="P:Notch signaling pathway"/>
    <property type="evidence" value="ECO:0007669"/>
    <property type="project" value="UniProtKB-KW"/>
</dbReference>
<dbReference type="GO" id="GO:0051168">
    <property type="term" value="P:nuclear export"/>
    <property type="evidence" value="ECO:0000318"/>
    <property type="project" value="GO_Central"/>
</dbReference>
<dbReference type="InterPro" id="IPR031418">
    <property type="entry name" value="RITA1"/>
</dbReference>
<dbReference type="PANTHER" id="PTHR34917">
    <property type="entry name" value="RBPJ-INTERACTING AND TUBULIN-ASSOCIATED PROTEIN 1"/>
    <property type="match status" value="1"/>
</dbReference>
<dbReference type="PANTHER" id="PTHR34917:SF1">
    <property type="entry name" value="RBPJ-INTERACTING AND TUBULIN-ASSOCIATED PROTEIN 1"/>
    <property type="match status" value="1"/>
</dbReference>
<dbReference type="Pfam" id="PF17066">
    <property type="entry name" value="RITA"/>
    <property type="match status" value="1"/>
</dbReference>
<feature type="chain" id="PRO_0000404585" description="RBPJ-interacting and tubulin-associated protein 1">
    <location>
        <begin position="1"/>
        <end position="239"/>
    </location>
</feature>
<feature type="region of interest" description="Disordered" evidence="2">
    <location>
        <begin position="62"/>
        <end position="97"/>
    </location>
</feature>
<feature type="region of interest" description="Interaction with RBPJ/RBPSUH" evidence="1">
    <location>
        <begin position="129"/>
        <end position="158"/>
    </location>
</feature>
<feature type="region of interest" description="Disordered" evidence="2">
    <location>
        <begin position="149"/>
        <end position="239"/>
    </location>
</feature>
<feature type="region of interest" description="Interaction with tubulin" evidence="1">
    <location>
        <begin position="158"/>
        <end position="239"/>
    </location>
</feature>
<feature type="short sequence motif" description="Nuclear export signal" evidence="4">
    <location>
        <begin position="12"/>
        <end position="24"/>
    </location>
</feature>
<feature type="short sequence motif" description="Nuclear localization signal" evidence="1">
    <location>
        <begin position="93"/>
        <end position="109"/>
    </location>
</feature>
<feature type="compositionally biased region" description="Polar residues" evidence="2">
    <location>
        <begin position="149"/>
        <end position="159"/>
    </location>
</feature>
<feature type="compositionally biased region" description="Polar residues" evidence="2">
    <location>
        <begin position="203"/>
        <end position="221"/>
    </location>
</feature>
<feature type="mutagenesis site" description="Results in nuclear accumulation; when associated with A-14 and A-16." evidence="3">
    <original>L</original>
    <variation>A</variation>
    <location>
        <position position="12"/>
    </location>
</feature>
<feature type="mutagenesis site" description="Results in nuclear accumulation; when associated with A-12 and A-16." evidence="3">
    <original>L</original>
    <variation>A</variation>
    <location>
        <position position="14"/>
    </location>
</feature>
<feature type="mutagenesis site" description="Results in nuclear accumulation; when associated with A-12 and A-14." evidence="3">
    <original>I</original>
    <variation>A</variation>
    <location>
        <position position="16"/>
    </location>
</feature>
<comment type="function">
    <text evidence="3">Tubulin-binding protein that acts as a negative regulator of Notch signaling pathway. Shuttles between the cytoplasm and the nucleus and mediates the nuclear export of rbpj/rbpsuh, thereby preventing the interaction between rbpj/rbpsuh and NICD product of Notch proteins (Notch intracellular domain), leading to down-regulate Notch-mediated transcription. May play a role in neurogenesis.</text>
</comment>
<comment type="subunit">
    <text evidence="3">Interacts with rbpj/rbpsuh.</text>
</comment>
<comment type="interaction">
    <interactant intactId="EBI-8517225">
        <id>P0CJ62</id>
    </interactant>
    <interactant intactId="EBI-632552">
        <id>Q06330</id>
        <label>RBPJ</label>
    </interactant>
    <organismsDiffer>true</organismsDiffer>
    <experiments>2</experiments>
</comment>
<comment type="subcellular location">
    <subcellularLocation>
        <location evidence="3">Cytoplasm</location>
    </subcellularLocation>
    <subcellularLocation>
        <location evidence="3">Nucleus</location>
    </subcellularLocation>
    <text>Shuttles rapidly between the cytoplasm and the nucleus.</text>
</comment>
<comment type="similarity">
    <text evidence="4">Belongs to the RITA family.</text>
</comment>
<gene>
    <name type="primary">rita1</name>
    <name type="synonym">rita</name>
</gene>
<evidence type="ECO:0000250" key="1"/>
<evidence type="ECO:0000256" key="2">
    <source>
        <dbReference type="SAM" id="MobiDB-lite"/>
    </source>
</evidence>
<evidence type="ECO:0000269" key="3">
    <source>
    </source>
</evidence>
<evidence type="ECO:0000305" key="4"/>
<protein>
    <recommendedName>
        <fullName>RBPJ-interacting and tubulin-associated protein 1</fullName>
    </recommendedName>
    <alternativeName>
        <fullName>RBPJ-interacting and tubulin-associated protein</fullName>
    </alternativeName>
</protein>
<reference key="1">
    <citation type="submission" date="2004-05" db="EMBL/GenBank/DDBJ databases">
        <authorList>
            <consortium name="NIH - Xenopus Gene Collection (XGC) project"/>
        </authorList>
    </citation>
    <scope>NUCLEOTIDE SEQUENCE [LARGE SCALE MRNA]</scope>
</reference>
<reference key="2">
    <citation type="journal article" date="2011" name="EMBO J.">
        <title>RITA, a novel modulator of Notch signalling, acts via nuclear export of RBP-J.</title>
        <authorList>
            <person name="Wacker S.A."/>
            <person name="Alvarado C."/>
            <person name="von Wichert G."/>
            <person name="Knippschild U."/>
            <person name="Wiedenmann J."/>
            <person name="Clauss K."/>
            <person name="Nienhaus G.U."/>
            <person name="Hameister H."/>
            <person name="Baumann B."/>
            <person name="Borggrefe T."/>
            <person name="Knochel W."/>
            <person name="Oswald F."/>
        </authorList>
    </citation>
    <scope>FUNCTION</scope>
    <scope>SUBCELLULAR LOCATION</scope>
    <scope>MUTAGENESIS OF LEU-12; LEU-14 AND ILE-16</scope>
    <scope>INTERACTION WITH RBPJ</scope>
</reference>
<accession>P0CJ62</accession>
<organism>
    <name type="scientific">Xenopus laevis</name>
    <name type="common">African clawed frog</name>
    <dbReference type="NCBI Taxonomy" id="8355"/>
    <lineage>
        <taxon>Eukaryota</taxon>
        <taxon>Metazoa</taxon>
        <taxon>Chordata</taxon>
        <taxon>Craniata</taxon>
        <taxon>Vertebrata</taxon>
        <taxon>Euteleostomi</taxon>
        <taxon>Amphibia</taxon>
        <taxon>Batrachia</taxon>
        <taxon>Anura</taxon>
        <taxon>Pipoidea</taxon>
        <taxon>Pipidae</taxon>
        <taxon>Xenopodinae</taxon>
        <taxon>Xenopus</taxon>
        <taxon>Xenopus</taxon>
    </lineage>
</organism>